<evidence type="ECO:0000255" key="1">
    <source>
        <dbReference type="HAMAP-Rule" id="MF_00040"/>
    </source>
</evidence>
<dbReference type="EMBL" id="CP000082">
    <property type="protein sequence ID" value="AAZ19382.1"/>
    <property type="molecule type" value="Genomic_DNA"/>
</dbReference>
<dbReference type="RefSeq" id="WP_011280799.1">
    <property type="nucleotide sequence ID" value="NC_007204.1"/>
</dbReference>
<dbReference type="SMR" id="Q4FRH6"/>
<dbReference type="STRING" id="259536.Psyc_1534"/>
<dbReference type="KEGG" id="par:Psyc_1534"/>
<dbReference type="eggNOG" id="COG0233">
    <property type="taxonomic scope" value="Bacteria"/>
</dbReference>
<dbReference type="HOGENOM" id="CLU_073981_2_1_6"/>
<dbReference type="OrthoDB" id="9804006at2"/>
<dbReference type="Proteomes" id="UP000000546">
    <property type="component" value="Chromosome"/>
</dbReference>
<dbReference type="GO" id="GO:0005829">
    <property type="term" value="C:cytosol"/>
    <property type="evidence" value="ECO:0007669"/>
    <property type="project" value="GOC"/>
</dbReference>
<dbReference type="GO" id="GO:0043023">
    <property type="term" value="F:ribosomal large subunit binding"/>
    <property type="evidence" value="ECO:0007669"/>
    <property type="project" value="TreeGrafter"/>
</dbReference>
<dbReference type="GO" id="GO:0002184">
    <property type="term" value="P:cytoplasmic translational termination"/>
    <property type="evidence" value="ECO:0007669"/>
    <property type="project" value="TreeGrafter"/>
</dbReference>
<dbReference type="CDD" id="cd00520">
    <property type="entry name" value="RRF"/>
    <property type="match status" value="1"/>
</dbReference>
<dbReference type="FunFam" id="1.10.132.20:FF:000001">
    <property type="entry name" value="Ribosome-recycling factor"/>
    <property type="match status" value="1"/>
</dbReference>
<dbReference type="FunFam" id="3.30.1360.40:FF:000001">
    <property type="entry name" value="Ribosome-recycling factor"/>
    <property type="match status" value="1"/>
</dbReference>
<dbReference type="Gene3D" id="3.30.1360.40">
    <property type="match status" value="1"/>
</dbReference>
<dbReference type="Gene3D" id="1.10.132.20">
    <property type="entry name" value="Ribosome-recycling factor"/>
    <property type="match status" value="1"/>
</dbReference>
<dbReference type="HAMAP" id="MF_00040">
    <property type="entry name" value="RRF"/>
    <property type="match status" value="1"/>
</dbReference>
<dbReference type="InterPro" id="IPR002661">
    <property type="entry name" value="Ribosome_recyc_fac"/>
</dbReference>
<dbReference type="InterPro" id="IPR023584">
    <property type="entry name" value="Ribosome_recyc_fac_dom"/>
</dbReference>
<dbReference type="InterPro" id="IPR036191">
    <property type="entry name" value="RRF_sf"/>
</dbReference>
<dbReference type="NCBIfam" id="TIGR00496">
    <property type="entry name" value="frr"/>
    <property type="match status" value="1"/>
</dbReference>
<dbReference type="PANTHER" id="PTHR20982:SF3">
    <property type="entry name" value="MITOCHONDRIAL RIBOSOME RECYCLING FACTOR PSEUDO 1"/>
    <property type="match status" value="1"/>
</dbReference>
<dbReference type="PANTHER" id="PTHR20982">
    <property type="entry name" value="RIBOSOME RECYCLING FACTOR"/>
    <property type="match status" value="1"/>
</dbReference>
<dbReference type="Pfam" id="PF01765">
    <property type="entry name" value="RRF"/>
    <property type="match status" value="1"/>
</dbReference>
<dbReference type="SUPFAM" id="SSF55194">
    <property type="entry name" value="Ribosome recycling factor, RRF"/>
    <property type="match status" value="1"/>
</dbReference>
<protein>
    <recommendedName>
        <fullName evidence="1">Ribosome-recycling factor</fullName>
        <shortName evidence="1">RRF</shortName>
    </recommendedName>
    <alternativeName>
        <fullName evidence="1">Ribosome-releasing factor</fullName>
    </alternativeName>
</protein>
<name>RRF_PSYA2</name>
<feature type="chain" id="PRO_1000003237" description="Ribosome-recycling factor">
    <location>
        <begin position="1"/>
        <end position="184"/>
    </location>
</feature>
<organism>
    <name type="scientific">Psychrobacter arcticus (strain DSM 17307 / VKM B-2377 / 273-4)</name>
    <dbReference type="NCBI Taxonomy" id="259536"/>
    <lineage>
        <taxon>Bacteria</taxon>
        <taxon>Pseudomonadati</taxon>
        <taxon>Pseudomonadota</taxon>
        <taxon>Gammaproteobacteria</taxon>
        <taxon>Moraxellales</taxon>
        <taxon>Moraxellaceae</taxon>
        <taxon>Psychrobacter</taxon>
    </lineage>
</organism>
<proteinExistence type="inferred from homology"/>
<reference key="1">
    <citation type="journal article" date="2010" name="Appl. Environ. Microbiol.">
        <title>The genome sequence of Psychrobacter arcticus 273-4, a psychroactive Siberian permafrost bacterium, reveals mechanisms for adaptation to low-temperature growth.</title>
        <authorList>
            <person name="Ayala-del-Rio H.L."/>
            <person name="Chain P.S."/>
            <person name="Grzymski J.J."/>
            <person name="Ponder M.A."/>
            <person name="Ivanova N."/>
            <person name="Bergholz P.W."/>
            <person name="Di Bartolo G."/>
            <person name="Hauser L."/>
            <person name="Land M."/>
            <person name="Bakermans C."/>
            <person name="Rodrigues D."/>
            <person name="Klappenbach J."/>
            <person name="Zarka D."/>
            <person name="Larimer F."/>
            <person name="Richardson P."/>
            <person name="Murray A."/>
            <person name="Thomashow M."/>
            <person name="Tiedje J.M."/>
        </authorList>
    </citation>
    <scope>NUCLEOTIDE SEQUENCE [LARGE SCALE GENOMIC DNA]</scope>
    <source>
        <strain>DSM 17307 / VKM B-2377 / 273-4</strain>
    </source>
</reference>
<sequence length="184" mass="20874">MIKEIKQDGEARMQKTLEALESTFSKVRTGRAHPGMLSGVMVSYYGSDTPLNQVASVNVEDSRTLLVQPFDRTMVQAIDKAIREADLGLNPMTADVIRVPMPALTEETRRDMQKLARGEAENSRVSIRNIRRDMMNDIKELAKEKEISEDDEHRASDDIQKITDKYIETIDSRLSKKESDLMSV</sequence>
<keyword id="KW-0963">Cytoplasm</keyword>
<keyword id="KW-0648">Protein biosynthesis</keyword>
<keyword id="KW-1185">Reference proteome</keyword>
<comment type="function">
    <text evidence="1">Responsible for the release of ribosomes from messenger RNA at the termination of protein biosynthesis. May increase the efficiency of translation by recycling ribosomes from one round of translation to another.</text>
</comment>
<comment type="subcellular location">
    <subcellularLocation>
        <location evidence="1">Cytoplasm</location>
    </subcellularLocation>
</comment>
<comment type="similarity">
    <text evidence="1">Belongs to the RRF family.</text>
</comment>
<accession>Q4FRH6</accession>
<gene>
    <name evidence="1" type="primary">frr</name>
    <name type="ordered locus">Psyc_1534</name>
</gene>